<organism>
    <name type="scientific">Lactiplantibacillus plantarum (strain ATCC BAA-793 / NCIMB 8826 / WCFS1)</name>
    <name type="common">Lactobacillus plantarum</name>
    <dbReference type="NCBI Taxonomy" id="220668"/>
    <lineage>
        <taxon>Bacteria</taxon>
        <taxon>Bacillati</taxon>
        <taxon>Bacillota</taxon>
        <taxon>Bacilli</taxon>
        <taxon>Lactobacillales</taxon>
        <taxon>Lactobacillaceae</taxon>
        <taxon>Lactiplantibacillus</taxon>
    </lineage>
</organism>
<gene>
    <name evidence="1" type="primary">rpoC</name>
    <name type="ordered locus">lp_1022</name>
</gene>
<proteinExistence type="inferred from homology"/>
<feature type="chain" id="PRO_0000067749" description="DNA-directed RNA polymerase subunit beta'">
    <location>
        <begin position="1"/>
        <end position="1213"/>
    </location>
</feature>
<feature type="binding site" evidence="1">
    <location>
        <position position="60"/>
    </location>
    <ligand>
        <name>Zn(2+)</name>
        <dbReference type="ChEBI" id="CHEBI:29105"/>
        <label>1</label>
    </ligand>
</feature>
<feature type="binding site" evidence="1">
    <location>
        <position position="62"/>
    </location>
    <ligand>
        <name>Zn(2+)</name>
        <dbReference type="ChEBI" id="CHEBI:29105"/>
        <label>1</label>
    </ligand>
</feature>
<feature type="binding site" evidence="1">
    <location>
        <position position="75"/>
    </location>
    <ligand>
        <name>Zn(2+)</name>
        <dbReference type="ChEBI" id="CHEBI:29105"/>
        <label>1</label>
    </ligand>
</feature>
<feature type="binding site" evidence="1">
    <location>
        <position position="78"/>
    </location>
    <ligand>
        <name>Zn(2+)</name>
        <dbReference type="ChEBI" id="CHEBI:29105"/>
        <label>1</label>
    </ligand>
</feature>
<feature type="binding site" evidence="1">
    <location>
        <position position="449"/>
    </location>
    <ligand>
        <name>Mg(2+)</name>
        <dbReference type="ChEBI" id="CHEBI:18420"/>
    </ligand>
</feature>
<feature type="binding site" evidence="1">
    <location>
        <position position="451"/>
    </location>
    <ligand>
        <name>Mg(2+)</name>
        <dbReference type="ChEBI" id="CHEBI:18420"/>
    </ligand>
</feature>
<feature type="binding site" evidence="1">
    <location>
        <position position="453"/>
    </location>
    <ligand>
        <name>Mg(2+)</name>
        <dbReference type="ChEBI" id="CHEBI:18420"/>
    </ligand>
</feature>
<feature type="binding site" evidence="1">
    <location>
        <position position="818"/>
    </location>
    <ligand>
        <name>Zn(2+)</name>
        <dbReference type="ChEBI" id="CHEBI:29105"/>
        <label>2</label>
    </ligand>
</feature>
<feature type="binding site" evidence="1">
    <location>
        <position position="892"/>
    </location>
    <ligand>
        <name>Zn(2+)</name>
        <dbReference type="ChEBI" id="CHEBI:29105"/>
        <label>2</label>
    </ligand>
</feature>
<feature type="binding site" evidence="1">
    <location>
        <position position="899"/>
    </location>
    <ligand>
        <name>Zn(2+)</name>
        <dbReference type="ChEBI" id="CHEBI:29105"/>
        <label>2</label>
    </ligand>
</feature>
<feature type="binding site" evidence="1">
    <location>
        <position position="902"/>
    </location>
    <ligand>
        <name>Zn(2+)</name>
        <dbReference type="ChEBI" id="CHEBI:29105"/>
        <label>2</label>
    </ligand>
</feature>
<accession>Q88XZ2</accession>
<accession>F9UMJ9</accession>
<protein>
    <recommendedName>
        <fullName evidence="1">DNA-directed RNA polymerase subunit beta'</fullName>
        <shortName evidence="1">RNAP subunit beta'</shortName>
        <ecNumber evidence="1">2.7.7.6</ecNumber>
    </recommendedName>
    <alternativeName>
        <fullName evidence="1">RNA polymerase subunit beta'</fullName>
    </alternativeName>
    <alternativeName>
        <fullName evidence="1">Transcriptase subunit beta'</fullName>
    </alternativeName>
</protein>
<dbReference type="EC" id="2.7.7.6" evidence="1"/>
<dbReference type="EMBL" id="AL935263">
    <property type="protein sequence ID" value="CCC78438.1"/>
    <property type="molecule type" value="Genomic_DNA"/>
</dbReference>
<dbReference type="RefSeq" id="WP_003641247.1">
    <property type="nucleotide sequence ID" value="NC_004567.2"/>
</dbReference>
<dbReference type="RefSeq" id="YP_004888952.1">
    <property type="nucleotide sequence ID" value="NC_004567.2"/>
</dbReference>
<dbReference type="SMR" id="Q88XZ2"/>
<dbReference type="STRING" id="220668.lp_1022"/>
<dbReference type="EnsemblBacteria" id="CCC78438">
    <property type="protein sequence ID" value="CCC78438"/>
    <property type="gene ID" value="lp_1022"/>
</dbReference>
<dbReference type="GeneID" id="89668540"/>
<dbReference type="KEGG" id="lpl:lp_1022"/>
<dbReference type="PATRIC" id="fig|220668.9.peg.864"/>
<dbReference type="eggNOG" id="COG0086">
    <property type="taxonomic scope" value="Bacteria"/>
</dbReference>
<dbReference type="HOGENOM" id="CLU_000524_3_1_9"/>
<dbReference type="OrthoDB" id="9815296at2"/>
<dbReference type="PhylomeDB" id="Q88XZ2"/>
<dbReference type="Proteomes" id="UP000000432">
    <property type="component" value="Chromosome"/>
</dbReference>
<dbReference type="GO" id="GO:0000428">
    <property type="term" value="C:DNA-directed RNA polymerase complex"/>
    <property type="evidence" value="ECO:0007669"/>
    <property type="project" value="UniProtKB-KW"/>
</dbReference>
<dbReference type="GO" id="GO:0003677">
    <property type="term" value="F:DNA binding"/>
    <property type="evidence" value="ECO:0007669"/>
    <property type="project" value="UniProtKB-UniRule"/>
</dbReference>
<dbReference type="GO" id="GO:0003899">
    <property type="term" value="F:DNA-directed RNA polymerase activity"/>
    <property type="evidence" value="ECO:0007669"/>
    <property type="project" value="UniProtKB-UniRule"/>
</dbReference>
<dbReference type="GO" id="GO:0000287">
    <property type="term" value="F:magnesium ion binding"/>
    <property type="evidence" value="ECO:0007669"/>
    <property type="project" value="UniProtKB-UniRule"/>
</dbReference>
<dbReference type="GO" id="GO:0008270">
    <property type="term" value="F:zinc ion binding"/>
    <property type="evidence" value="ECO:0007669"/>
    <property type="project" value="UniProtKB-UniRule"/>
</dbReference>
<dbReference type="GO" id="GO:0006351">
    <property type="term" value="P:DNA-templated transcription"/>
    <property type="evidence" value="ECO:0007669"/>
    <property type="project" value="UniProtKB-UniRule"/>
</dbReference>
<dbReference type="CDD" id="cd02655">
    <property type="entry name" value="RNAP_beta'_C"/>
    <property type="match status" value="1"/>
</dbReference>
<dbReference type="CDD" id="cd01609">
    <property type="entry name" value="RNAP_beta'_N"/>
    <property type="match status" value="1"/>
</dbReference>
<dbReference type="FunFam" id="4.10.860.120:FF:000001">
    <property type="entry name" value="DNA-directed RNA polymerase subunit beta"/>
    <property type="match status" value="1"/>
</dbReference>
<dbReference type="Gene3D" id="1.10.132.30">
    <property type="match status" value="1"/>
</dbReference>
<dbReference type="Gene3D" id="1.10.150.390">
    <property type="match status" value="1"/>
</dbReference>
<dbReference type="Gene3D" id="1.10.1790.20">
    <property type="match status" value="1"/>
</dbReference>
<dbReference type="Gene3D" id="1.10.40.90">
    <property type="match status" value="1"/>
</dbReference>
<dbReference type="Gene3D" id="2.40.40.20">
    <property type="match status" value="1"/>
</dbReference>
<dbReference type="Gene3D" id="2.40.50.100">
    <property type="match status" value="1"/>
</dbReference>
<dbReference type="Gene3D" id="4.10.860.120">
    <property type="entry name" value="RNA polymerase II, clamp domain"/>
    <property type="match status" value="1"/>
</dbReference>
<dbReference type="Gene3D" id="1.10.274.100">
    <property type="entry name" value="RNA polymerase Rpb1, domain 3"/>
    <property type="match status" value="1"/>
</dbReference>
<dbReference type="HAMAP" id="MF_01322">
    <property type="entry name" value="RNApol_bact_RpoC"/>
    <property type="match status" value="1"/>
</dbReference>
<dbReference type="InterPro" id="IPR045867">
    <property type="entry name" value="DNA-dir_RpoC_beta_prime"/>
</dbReference>
<dbReference type="InterPro" id="IPR012754">
    <property type="entry name" value="DNA-dir_RpoC_beta_prime_bact"/>
</dbReference>
<dbReference type="InterPro" id="IPR000722">
    <property type="entry name" value="RNA_pol_asu"/>
</dbReference>
<dbReference type="InterPro" id="IPR006592">
    <property type="entry name" value="RNA_pol_N"/>
</dbReference>
<dbReference type="InterPro" id="IPR007080">
    <property type="entry name" value="RNA_pol_Rpb1_1"/>
</dbReference>
<dbReference type="InterPro" id="IPR007066">
    <property type="entry name" value="RNA_pol_Rpb1_3"/>
</dbReference>
<dbReference type="InterPro" id="IPR042102">
    <property type="entry name" value="RNA_pol_Rpb1_3_sf"/>
</dbReference>
<dbReference type="InterPro" id="IPR007083">
    <property type="entry name" value="RNA_pol_Rpb1_4"/>
</dbReference>
<dbReference type="InterPro" id="IPR007081">
    <property type="entry name" value="RNA_pol_Rpb1_5"/>
</dbReference>
<dbReference type="InterPro" id="IPR044893">
    <property type="entry name" value="RNA_pol_Rpb1_clamp_domain"/>
</dbReference>
<dbReference type="InterPro" id="IPR038120">
    <property type="entry name" value="Rpb1_funnel_sf"/>
</dbReference>
<dbReference type="NCBIfam" id="TIGR02386">
    <property type="entry name" value="rpoC_TIGR"/>
    <property type="match status" value="1"/>
</dbReference>
<dbReference type="PANTHER" id="PTHR19376">
    <property type="entry name" value="DNA-DIRECTED RNA POLYMERASE"/>
    <property type="match status" value="1"/>
</dbReference>
<dbReference type="PANTHER" id="PTHR19376:SF54">
    <property type="entry name" value="DNA-DIRECTED RNA POLYMERASE SUBUNIT BETA"/>
    <property type="match status" value="1"/>
</dbReference>
<dbReference type="Pfam" id="PF04997">
    <property type="entry name" value="RNA_pol_Rpb1_1"/>
    <property type="match status" value="1"/>
</dbReference>
<dbReference type="Pfam" id="PF00623">
    <property type="entry name" value="RNA_pol_Rpb1_2"/>
    <property type="match status" value="1"/>
</dbReference>
<dbReference type="Pfam" id="PF04983">
    <property type="entry name" value="RNA_pol_Rpb1_3"/>
    <property type="match status" value="1"/>
</dbReference>
<dbReference type="Pfam" id="PF05000">
    <property type="entry name" value="RNA_pol_Rpb1_4"/>
    <property type="match status" value="1"/>
</dbReference>
<dbReference type="Pfam" id="PF04998">
    <property type="entry name" value="RNA_pol_Rpb1_5"/>
    <property type="match status" value="1"/>
</dbReference>
<dbReference type="SMART" id="SM00663">
    <property type="entry name" value="RPOLA_N"/>
    <property type="match status" value="1"/>
</dbReference>
<dbReference type="SUPFAM" id="SSF64484">
    <property type="entry name" value="beta and beta-prime subunits of DNA dependent RNA-polymerase"/>
    <property type="match status" value="1"/>
</dbReference>
<comment type="function">
    <text evidence="1">DNA-dependent RNA polymerase catalyzes the transcription of DNA into RNA using the four ribonucleoside triphosphates as substrates.</text>
</comment>
<comment type="catalytic activity">
    <reaction evidence="1">
        <text>RNA(n) + a ribonucleoside 5'-triphosphate = RNA(n+1) + diphosphate</text>
        <dbReference type="Rhea" id="RHEA:21248"/>
        <dbReference type="Rhea" id="RHEA-COMP:14527"/>
        <dbReference type="Rhea" id="RHEA-COMP:17342"/>
        <dbReference type="ChEBI" id="CHEBI:33019"/>
        <dbReference type="ChEBI" id="CHEBI:61557"/>
        <dbReference type="ChEBI" id="CHEBI:140395"/>
        <dbReference type="EC" id="2.7.7.6"/>
    </reaction>
</comment>
<comment type="cofactor">
    <cofactor evidence="1">
        <name>Mg(2+)</name>
        <dbReference type="ChEBI" id="CHEBI:18420"/>
    </cofactor>
    <text evidence="1">Binds 1 Mg(2+) ion per subunit.</text>
</comment>
<comment type="cofactor">
    <cofactor evidence="1">
        <name>Zn(2+)</name>
        <dbReference type="ChEBI" id="CHEBI:29105"/>
    </cofactor>
    <text evidence="1">Binds 2 Zn(2+) ions per subunit.</text>
</comment>
<comment type="subunit">
    <text evidence="1">The RNAP catalytic core consists of 2 alpha, 1 beta, 1 beta' and 1 omega subunit. When a sigma factor is associated with the core the holoenzyme is formed, which can initiate transcription.</text>
</comment>
<comment type="similarity">
    <text evidence="1">Belongs to the RNA polymerase beta' chain family.</text>
</comment>
<sequence>MIDVNKFESMQIGLASPDKIRSWSYGEVKKPETINYRTLKPEKDGLFDERIFGPTKDWECACGKYKRIRYKGIVCDRCGVEVTRSKVRRERMGHIELAAPVTHIWYFKGIPSRMGLVLDMSPRALEEIIYFASYVVIESGNTPLEKKQLLSEREYREKKAQYGNEFEAAMGAEAIKRLLNNVDLEKEARDLKETLKDASGQKRTRAVRRLDIIEAFVTSGNEPAWMVMDAIPVIPPDLRPMVQLEGGRFATSDLNDLYRRVINRNNRLKRLLDLNAPGIIVQNEKRMLQEAVDALIDNGRRGRPVAGPGNRPLKSLSHMLKGKQGRFRQNLLGKRVDYSGRSVIDVGPFLKMNQMGLPRQMALELFKPFIMKELVKRELASNIKNAKRKIEHADDDVWGVLEDVIKEHPVLLNRAPTLHRLGIQAFEPVLVSGKAMRLHPLACEAYNADFDGDQMAIHVPLSDEAQAEARLLMLAAHHILAPKDGKPVVTPSQDMVIGNYYLTTEEIGREGEGMIFKDLNEAQKAYQSGYVHLHSRVGIQVSSMPDKPFTDDQKQAVLVTTVGKAIFNNILPGKFPYLNEPTNDNLIAGTPDKYFLKPGEDIHQFLDAQEIIPPFKKGFLADIIAEVYKQYHVTATSLLLDRMKDLGYNISTKSGLTVGVADITGLKEKPAIIAEAHKQVNTISKQFRRGLITDDERYERVIGVWNDAKDQIQQKLIESFNADNPIFMMSDSGARGNISNFTQLAGMRGLMAAPNGKIMELPILSNFREGLSVLEMFISTHGARKGMTDTALKTANSGYLTRRLVDVAQDVIVREKDCGTDRGLRIHAIMEGNEVIEPLYDRILGRYTMKTVFDPETHDEIVGNNVLIDEDLAHKIVDAGVTEVTIRSAFTCNTKHGVCEHCYGRNMATGDEVEVGEAVGTVAAQSIGEPGTQLTMRNFHTGGVAGDDITQGLPRVQEIVESRNPKGRAEISEVTGTVELIEENPAERTKEVTVKGETDTRTYTLPLTARMAVSEGDFIHRGAALNIGSIDPKQLIQVRDVLSTENYLLREVQKVYRMQGVEIGDKHVEIMIRQMLRKVRVMDPGDTDVLPGTLMDIADFKDENYKTLIAGGIPATSRPVILGITKAALETNSFLSAASFQETTRVLTDAAIRGKNDPLIGLKENVIIGKIIPAGTGMPVYRHIKPKEVGNVADGVYSISDLEKQMQEQDASK</sequence>
<keyword id="KW-0240">DNA-directed RNA polymerase</keyword>
<keyword id="KW-0460">Magnesium</keyword>
<keyword id="KW-0479">Metal-binding</keyword>
<keyword id="KW-0548">Nucleotidyltransferase</keyword>
<keyword id="KW-1185">Reference proteome</keyword>
<keyword id="KW-0804">Transcription</keyword>
<keyword id="KW-0808">Transferase</keyword>
<keyword id="KW-0862">Zinc</keyword>
<evidence type="ECO:0000255" key="1">
    <source>
        <dbReference type="HAMAP-Rule" id="MF_01322"/>
    </source>
</evidence>
<name>RPOC_LACPL</name>
<reference key="1">
    <citation type="journal article" date="2003" name="Proc. Natl. Acad. Sci. U.S.A.">
        <title>Complete genome sequence of Lactobacillus plantarum WCFS1.</title>
        <authorList>
            <person name="Kleerebezem M."/>
            <person name="Boekhorst J."/>
            <person name="van Kranenburg R."/>
            <person name="Molenaar D."/>
            <person name="Kuipers O.P."/>
            <person name="Leer R."/>
            <person name="Tarchini R."/>
            <person name="Peters S.A."/>
            <person name="Sandbrink H.M."/>
            <person name="Fiers M.W.E.J."/>
            <person name="Stiekema W."/>
            <person name="Klein Lankhorst R.M."/>
            <person name="Bron P.A."/>
            <person name="Hoffer S.M."/>
            <person name="Nierop Groot M.N."/>
            <person name="Kerkhoven R."/>
            <person name="De Vries M."/>
            <person name="Ursing B."/>
            <person name="De Vos W.M."/>
            <person name="Siezen R.J."/>
        </authorList>
    </citation>
    <scope>NUCLEOTIDE SEQUENCE [LARGE SCALE GENOMIC DNA]</scope>
    <source>
        <strain>ATCC BAA-793 / NCIMB 8826 / WCFS1</strain>
    </source>
</reference>
<reference key="2">
    <citation type="journal article" date="2012" name="J. Bacteriol.">
        <title>Complete resequencing and reannotation of the Lactobacillus plantarum WCFS1 genome.</title>
        <authorList>
            <person name="Siezen R.J."/>
            <person name="Francke C."/>
            <person name="Renckens B."/>
            <person name="Boekhorst J."/>
            <person name="Wels M."/>
            <person name="Kleerebezem M."/>
            <person name="van Hijum S.A."/>
        </authorList>
    </citation>
    <scope>NUCLEOTIDE SEQUENCE [LARGE SCALE GENOMIC DNA]</scope>
    <scope>GENOME REANNOTATION</scope>
    <source>
        <strain>ATCC BAA-793 / NCIMB 8826 / WCFS1</strain>
    </source>
</reference>